<gene>
    <name evidence="1" type="primary">nuoK</name>
    <name type="ordered locus">Glov_3128</name>
</gene>
<accession>B3E9V9</accession>
<feature type="chain" id="PRO_0000390076" description="NADH-quinone oxidoreductase subunit K">
    <location>
        <begin position="1"/>
        <end position="100"/>
    </location>
</feature>
<feature type="transmembrane region" description="Helical" evidence="1">
    <location>
        <begin position="4"/>
        <end position="24"/>
    </location>
</feature>
<feature type="transmembrane region" description="Helical" evidence="1">
    <location>
        <begin position="29"/>
        <end position="49"/>
    </location>
</feature>
<feature type="transmembrane region" description="Helical" evidence="1">
    <location>
        <begin position="60"/>
        <end position="80"/>
    </location>
</feature>
<name>NUOK_TRIL1</name>
<sequence length="100" mass="11037">MDNLSNYLIVSAVLFSIGTIGVLTRKNAIVVFMCIELMLNAVNLTFVAFSRHLGNLDGQIFVFFIMTVAAAEAAVGLALFIAFFNNRESIDIDDANLMKW</sequence>
<organism>
    <name type="scientific">Trichlorobacter lovleyi (strain ATCC BAA-1151 / DSM 17278 / SZ)</name>
    <name type="common">Geobacter lovleyi</name>
    <dbReference type="NCBI Taxonomy" id="398767"/>
    <lineage>
        <taxon>Bacteria</taxon>
        <taxon>Pseudomonadati</taxon>
        <taxon>Thermodesulfobacteriota</taxon>
        <taxon>Desulfuromonadia</taxon>
        <taxon>Geobacterales</taxon>
        <taxon>Geobacteraceae</taxon>
        <taxon>Trichlorobacter</taxon>
    </lineage>
</organism>
<reference key="1">
    <citation type="submission" date="2008-05" db="EMBL/GenBank/DDBJ databases">
        <title>Complete sequence of chromosome of Geobacter lovleyi SZ.</title>
        <authorList>
            <consortium name="US DOE Joint Genome Institute"/>
            <person name="Lucas S."/>
            <person name="Copeland A."/>
            <person name="Lapidus A."/>
            <person name="Glavina del Rio T."/>
            <person name="Dalin E."/>
            <person name="Tice H."/>
            <person name="Bruce D."/>
            <person name="Goodwin L."/>
            <person name="Pitluck S."/>
            <person name="Chertkov O."/>
            <person name="Meincke L."/>
            <person name="Brettin T."/>
            <person name="Detter J.C."/>
            <person name="Han C."/>
            <person name="Tapia R."/>
            <person name="Kuske C.R."/>
            <person name="Schmutz J."/>
            <person name="Larimer F."/>
            <person name="Land M."/>
            <person name="Hauser L."/>
            <person name="Kyrpides N."/>
            <person name="Mikhailova N."/>
            <person name="Sung Y."/>
            <person name="Fletcher K.E."/>
            <person name="Ritalahti K.M."/>
            <person name="Loeffler F.E."/>
            <person name="Richardson P."/>
        </authorList>
    </citation>
    <scope>NUCLEOTIDE SEQUENCE [LARGE SCALE GENOMIC DNA]</scope>
    <source>
        <strain>ATCC BAA-1151 / DSM 17278 / SZ</strain>
    </source>
</reference>
<proteinExistence type="inferred from homology"/>
<evidence type="ECO:0000255" key="1">
    <source>
        <dbReference type="HAMAP-Rule" id="MF_01456"/>
    </source>
</evidence>
<keyword id="KW-0997">Cell inner membrane</keyword>
<keyword id="KW-1003">Cell membrane</keyword>
<keyword id="KW-0472">Membrane</keyword>
<keyword id="KW-0520">NAD</keyword>
<keyword id="KW-0874">Quinone</keyword>
<keyword id="KW-1185">Reference proteome</keyword>
<keyword id="KW-1278">Translocase</keyword>
<keyword id="KW-0812">Transmembrane</keyword>
<keyword id="KW-1133">Transmembrane helix</keyword>
<keyword id="KW-0813">Transport</keyword>
<keyword id="KW-0830">Ubiquinone</keyword>
<comment type="function">
    <text evidence="1">NDH-1 shuttles electrons from NADH, via FMN and iron-sulfur (Fe-S) centers, to quinones in the respiratory chain. The immediate electron acceptor for the enzyme in this species is believed to be ubiquinone. Couples the redox reaction to proton translocation (for every two electrons transferred, four hydrogen ions are translocated across the cytoplasmic membrane), and thus conserves the redox energy in a proton gradient.</text>
</comment>
<comment type="catalytic activity">
    <reaction evidence="1">
        <text>a quinone + NADH + 5 H(+)(in) = a quinol + NAD(+) + 4 H(+)(out)</text>
        <dbReference type="Rhea" id="RHEA:57888"/>
        <dbReference type="ChEBI" id="CHEBI:15378"/>
        <dbReference type="ChEBI" id="CHEBI:24646"/>
        <dbReference type="ChEBI" id="CHEBI:57540"/>
        <dbReference type="ChEBI" id="CHEBI:57945"/>
        <dbReference type="ChEBI" id="CHEBI:132124"/>
    </reaction>
</comment>
<comment type="subunit">
    <text evidence="1">NDH-1 is composed of 14 different subunits. Subunits NuoA, H, J, K, L, M, N constitute the membrane sector of the complex.</text>
</comment>
<comment type="subcellular location">
    <subcellularLocation>
        <location evidence="1">Cell inner membrane</location>
        <topology evidence="1">Multi-pass membrane protein</topology>
    </subcellularLocation>
</comment>
<comment type="similarity">
    <text evidence="1">Belongs to the complex I subunit 4L family.</text>
</comment>
<dbReference type="EC" id="7.1.1.-" evidence="1"/>
<dbReference type="EMBL" id="CP001089">
    <property type="protein sequence ID" value="ACD96834.1"/>
    <property type="molecule type" value="Genomic_DNA"/>
</dbReference>
<dbReference type="RefSeq" id="WP_012471158.1">
    <property type="nucleotide sequence ID" value="NC_010814.1"/>
</dbReference>
<dbReference type="SMR" id="B3E9V9"/>
<dbReference type="STRING" id="398767.Glov_3128"/>
<dbReference type="KEGG" id="glo:Glov_3128"/>
<dbReference type="eggNOG" id="COG0713">
    <property type="taxonomic scope" value="Bacteria"/>
</dbReference>
<dbReference type="HOGENOM" id="CLU_144724_0_0_7"/>
<dbReference type="OrthoDB" id="9810120at2"/>
<dbReference type="Proteomes" id="UP000002420">
    <property type="component" value="Chromosome"/>
</dbReference>
<dbReference type="GO" id="GO:0030964">
    <property type="term" value="C:NADH dehydrogenase complex"/>
    <property type="evidence" value="ECO:0007669"/>
    <property type="project" value="TreeGrafter"/>
</dbReference>
<dbReference type="GO" id="GO:0005886">
    <property type="term" value="C:plasma membrane"/>
    <property type="evidence" value="ECO:0007669"/>
    <property type="project" value="UniProtKB-SubCell"/>
</dbReference>
<dbReference type="GO" id="GO:0050136">
    <property type="term" value="F:NADH:ubiquinone reductase (non-electrogenic) activity"/>
    <property type="evidence" value="ECO:0007669"/>
    <property type="project" value="UniProtKB-UniRule"/>
</dbReference>
<dbReference type="GO" id="GO:0048038">
    <property type="term" value="F:quinone binding"/>
    <property type="evidence" value="ECO:0007669"/>
    <property type="project" value="UniProtKB-KW"/>
</dbReference>
<dbReference type="GO" id="GO:0042773">
    <property type="term" value="P:ATP synthesis coupled electron transport"/>
    <property type="evidence" value="ECO:0007669"/>
    <property type="project" value="InterPro"/>
</dbReference>
<dbReference type="FunFam" id="1.10.287.3510:FF:000001">
    <property type="entry name" value="NADH-quinone oxidoreductase subunit K"/>
    <property type="match status" value="1"/>
</dbReference>
<dbReference type="Gene3D" id="1.10.287.3510">
    <property type="match status" value="1"/>
</dbReference>
<dbReference type="HAMAP" id="MF_01456">
    <property type="entry name" value="NDH1_NuoK"/>
    <property type="match status" value="1"/>
</dbReference>
<dbReference type="InterPro" id="IPR001133">
    <property type="entry name" value="NADH_UbQ_OxRdtase_chain4L/K"/>
</dbReference>
<dbReference type="InterPro" id="IPR039428">
    <property type="entry name" value="NUOK/Mnh_C1-like"/>
</dbReference>
<dbReference type="NCBIfam" id="NF004320">
    <property type="entry name" value="PRK05715.1-2"/>
    <property type="match status" value="1"/>
</dbReference>
<dbReference type="NCBIfam" id="NF004321">
    <property type="entry name" value="PRK05715.1-3"/>
    <property type="match status" value="1"/>
</dbReference>
<dbReference type="NCBIfam" id="NF004323">
    <property type="entry name" value="PRK05715.1-5"/>
    <property type="match status" value="1"/>
</dbReference>
<dbReference type="PANTHER" id="PTHR11434:SF21">
    <property type="entry name" value="NADH DEHYDROGENASE SUBUNIT 4L-RELATED"/>
    <property type="match status" value="1"/>
</dbReference>
<dbReference type="PANTHER" id="PTHR11434">
    <property type="entry name" value="NADH-UBIQUINONE OXIDOREDUCTASE SUBUNIT ND4L"/>
    <property type="match status" value="1"/>
</dbReference>
<dbReference type="Pfam" id="PF00420">
    <property type="entry name" value="Oxidored_q2"/>
    <property type="match status" value="1"/>
</dbReference>
<protein>
    <recommendedName>
        <fullName evidence="1">NADH-quinone oxidoreductase subunit K</fullName>
        <ecNumber evidence="1">7.1.1.-</ecNumber>
    </recommendedName>
    <alternativeName>
        <fullName evidence="1">NADH dehydrogenase I subunit K</fullName>
    </alternativeName>
    <alternativeName>
        <fullName evidence="1">NDH-1 subunit K</fullName>
    </alternativeName>
</protein>